<sequence length="100" mass="10956">MDLSPREKDKLLIFTAGLLAERRLARGLKLNYPEAVALISAALLEGARDGRSVAELMHYGTTLLSREQVMEGVPEMIPDIQVEATFPDGTKLVTVHQPIA</sequence>
<gene>
    <name evidence="1" type="primary">ureA</name>
    <name type="ordered locus">PSPA7_5586</name>
</gene>
<feature type="chain" id="PRO_1000046352" description="Urease subunit gamma">
    <location>
        <begin position="1"/>
        <end position="100"/>
    </location>
</feature>
<evidence type="ECO:0000255" key="1">
    <source>
        <dbReference type="HAMAP-Rule" id="MF_00739"/>
    </source>
</evidence>
<accession>A6VCX2</accession>
<organism>
    <name type="scientific">Pseudomonas paraeruginosa (strain DSM 24068 / PA7)</name>
    <name type="common">Pseudomonas aeruginosa (strain PA7)</name>
    <dbReference type="NCBI Taxonomy" id="381754"/>
    <lineage>
        <taxon>Bacteria</taxon>
        <taxon>Pseudomonadati</taxon>
        <taxon>Pseudomonadota</taxon>
        <taxon>Gammaproteobacteria</taxon>
        <taxon>Pseudomonadales</taxon>
        <taxon>Pseudomonadaceae</taxon>
        <taxon>Pseudomonas</taxon>
        <taxon>Pseudomonas paraeruginosa</taxon>
    </lineage>
</organism>
<protein>
    <recommendedName>
        <fullName evidence="1">Urease subunit gamma</fullName>
        <ecNumber evidence="1">3.5.1.5</ecNumber>
    </recommendedName>
    <alternativeName>
        <fullName evidence="1">Urea amidohydrolase subunit gamma</fullName>
    </alternativeName>
</protein>
<reference key="1">
    <citation type="submission" date="2007-06" db="EMBL/GenBank/DDBJ databases">
        <authorList>
            <person name="Dodson R.J."/>
            <person name="Harkins D."/>
            <person name="Paulsen I.T."/>
        </authorList>
    </citation>
    <scope>NUCLEOTIDE SEQUENCE [LARGE SCALE GENOMIC DNA]</scope>
    <source>
        <strain>DSM 24068 / PA7</strain>
    </source>
</reference>
<name>URE3_PSEP7</name>
<proteinExistence type="inferred from homology"/>
<comment type="catalytic activity">
    <reaction evidence="1">
        <text>urea + 2 H2O + H(+) = hydrogencarbonate + 2 NH4(+)</text>
        <dbReference type="Rhea" id="RHEA:20557"/>
        <dbReference type="ChEBI" id="CHEBI:15377"/>
        <dbReference type="ChEBI" id="CHEBI:15378"/>
        <dbReference type="ChEBI" id="CHEBI:16199"/>
        <dbReference type="ChEBI" id="CHEBI:17544"/>
        <dbReference type="ChEBI" id="CHEBI:28938"/>
        <dbReference type="EC" id="3.5.1.5"/>
    </reaction>
</comment>
<comment type="pathway">
    <text evidence="1">Nitrogen metabolism; urea degradation; CO(2) and NH(3) from urea (urease route): step 1/1.</text>
</comment>
<comment type="subunit">
    <text evidence="1">Heterotrimer of UreA (gamma), UreB (beta) and UreC (alpha) subunits. Three heterotrimers associate to form the active enzyme.</text>
</comment>
<comment type="subcellular location">
    <subcellularLocation>
        <location evidence="1">Cytoplasm</location>
    </subcellularLocation>
</comment>
<comment type="similarity">
    <text evidence="1">Belongs to the urease gamma subunit family.</text>
</comment>
<keyword id="KW-0963">Cytoplasm</keyword>
<keyword id="KW-0378">Hydrolase</keyword>
<dbReference type="EC" id="3.5.1.5" evidence="1"/>
<dbReference type="EMBL" id="CP000744">
    <property type="protein sequence ID" value="ABR84708.1"/>
    <property type="molecule type" value="Genomic_DNA"/>
</dbReference>
<dbReference type="RefSeq" id="WP_003095443.1">
    <property type="nucleotide sequence ID" value="NC_009656.1"/>
</dbReference>
<dbReference type="SMR" id="A6VCX2"/>
<dbReference type="KEGG" id="pap:PSPA7_5586"/>
<dbReference type="HOGENOM" id="CLU_145825_1_0_6"/>
<dbReference type="UniPathway" id="UPA00258">
    <property type="reaction ID" value="UER00370"/>
</dbReference>
<dbReference type="Proteomes" id="UP000001582">
    <property type="component" value="Chromosome"/>
</dbReference>
<dbReference type="GO" id="GO:0005737">
    <property type="term" value="C:cytoplasm"/>
    <property type="evidence" value="ECO:0007669"/>
    <property type="project" value="UniProtKB-SubCell"/>
</dbReference>
<dbReference type="GO" id="GO:0016151">
    <property type="term" value="F:nickel cation binding"/>
    <property type="evidence" value="ECO:0007669"/>
    <property type="project" value="InterPro"/>
</dbReference>
<dbReference type="GO" id="GO:0009039">
    <property type="term" value="F:urease activity"/>
    <property type="evidence" value="ECO:0007669"/>
    <property type="project" value="UniProtKB-UniRule"/>
</dbReference>
<dbReference type="GO" id="GO:0043419">
    <property type="term" value="P:urea catabolic process"/>
    <property type="evidence" value="ECO:0007669"/>
    <property type="project" value="UniProtKB-UniRule"/>
</dbReference>
<dbReference type="CDD" id="cd00390">
    <property type="entry name" value="Urease_gamma"/>
    <property type="match status" value="1"/>
</dbReference>
<dbReference type="Gene3D" id="3.30.280.10">
    <property type="entry name" value="Urease, gamma-like subunit"/>
    <property type="match status" value="1"/>
</dbReference>
<dbReference type="HAMAP" id="MF_00739">
    <property type="entry name" value="Urease_gamma"/>
    <property type="match status" value="1"/>
</dbReference>
<dbReference type="InterPro" id="IPR012010">
    <property type="entry name" value="Urease_gamma"/>
</dbReference>
<dbReference type="InterPro" id="IPR002026">
    <property type="entry name" value="Urease_gamma/gamma-beta_su"/>
</dbReference>
<dbReference type="InterPro" id="IPR036463">
    <property type="entry name" value="Urease_gamma_sf"/>
</dbReference>
<dbReference type="InterPro" id="IPR050069">
    <property type="entry name" value="Urease_subunit"/>
</dbReference>
<dbReference type="NCBIfam" id="NF009712">
    <property type="entry name" value="PRK13241.1"/>
    <property type="match status" value="1"/>
</dbReference>
<dbReference type="NCBIfam" id="TIGR00193">
    <property type="entry name" value="urease_gam"/>
    <property type="match status" value="1"/>
</dbReference>
<dbReference type="PANTHER" id="PTHR33569">
    <property type="entry name" value="UREASE"/>
    <property type="match status" value="1"/>
</dbReference>
<dbReference type="PANTHER" id="PTHR33569:SF1">
    <property type="entry name" value="UREASE"/>
    <property type="match status" value="1"/>
</dbReference>
<dbReference type="Pfam" id="PF00547">
    <property type="entry name" value="Urease_gamma"/>
    <property type="match status" value="1"/>
</dbReference>
<dbReference type="PIRSF" id="PIRSF001223">
    <property type="entry name" value="Urease_gamma"/>
    <property type="match status" value="1"/>
</dbReference>
<dbReference type="SUPFAM" id="SSF54111">
    <property type="entry name" value="Urease, gamma-subunit"/>
    <property type="match status" value="1"/>
</dbReference>